<dbReference type="EC" id="4.3.1.19"/>
<dbReference type="EMBL" id="AL123456">
    <property type="protein sequence ID" value="CCP44323.1"/>
    <property type="molecule type" value="Genomic_DNA"/>
</dbReference>
<dbReference type="PIR" id="D70763">
    <property type="entry name" value="D70763"/>
</dbReference>
<dbReference type="RefSeq" id="NP_216075.1">
    <property type="nucleotide sequence ID" value="NC_000962.3"/>
</dbReference>
<dbReference type="RefSeq" id="WP_003407781.1">
    <property type="nucleotide sequence ID" value="NZ_NVQJ01000004.1"/>
</dbReference>
<dbReference type="SMR" id="P9WG95"/>
<dbReference type="FunCoup" id="P9WG95">
    <property type="interactions" value="477"/>
</dbReference>
<dbReference type="STRING" id="83332.Rv1559"/>
<dbReference type="iPTMnet" id="P9WG95"/>
<dbReference type="PaxDb" id="83332-Rv1559"/>
<dbReference type="DNASU" id="886365"/>
<dbReference type="GeneID" id="45425543"/>
<dbReference type="GeneID" id="886365"/>
<dbReference type="KEGG" id="mtu:Rv1559"/>
<dbReference type="KEGG" id="mtv:RVBD_1559"/>
<dbReference type="TubercuList" id="Rv1559"/>
<dbReference type="eggNOG" id="COG1171">
    <property type="taxonomic scope" value="Bacteria"/>
</dbReference>
<dbReference type="InParanoid" id="P9WG95"/>
<dbReference type="OrthoDB" id="9811476at2"/>
<dbReference type="PhylomeDB" id="P9WG95"/>
<dbReference type="UniPathway" id="UPA00047">
    <property type="reaction ID" value="UER00054"/>
</dbReference>
<dbReference type="Proteomes" id="UP000001584">
    <property type="component" value="Chromosome"/>
</dbReference>
<dbReference type="GO" id="GO:0005886">
    <property type="term" value="C:plasma membrane"/>
    <property type="evidence" value="ECO:0007005"/>
    <property type="project" value="MTBBASE"/>
</dbReference>
<dbReference type="GO" id="GO:0030170">
    <property type="term" value="F:pyridoxal phosphate binding"/>
    <property type="evidence" value="ECO:0007669"/>
    <property type="project" value="InterPro"/>
</dbReference>
<dbReference type="GO" id="GO:0004794">
    <property type="term" value="F:threonine deaminase activity"/>
    <property type="evidence" value="ECO:0000318"/>
    <property type="project" value="GO_Central"/>
</dbReference>
<dbReference type="GO" id="GO:0009097">
    <property type="term" value="P:isoleucine biosynthetic process"/>
    <property type="evidence" value="ECO:0000318"/>
    <property type="project" value="GO_Central"/>
</dbReference>
<dbReference type="GO" id="GO:0006566">
    <property type="term" value="P:threonine metabolic process"/>
    <property type="evidence" value="ECO:0000250"/>
    <property type="project" value="UniProtKB"/>
</dbReference>
<dbReference type="CDD" id="cd04907">
    <property type="entry name" value="ACT_ThrD-I_2"/>
    <property type="match status" value="1"/>
</dbReference>
<dbReference type="CDD" id="cd01562">
    <property type="entry name" value="Thr-dehyd"/>
    <property type="match status" value="1"/>
</dbReference>
<dbReference type="FunFam" id="3.40.1020.10:FF:000002">
    <property type="entry name" value="L-threonine dehydratase"/>
    <property type="match status" value="1"/>
</dbReference>
<dbReference type="FunFam" id="3.40.50.1100:FF:000005">
    <property type="entry name" value="Threonine dehydratase catabolic"/>
    <property type="match status" value="1"/>
</dbReference>
<dbReference type="Gene3D" id="3.40.50.1100">
    <property type="match status" value="2"/>
</dbReference>
<dbReference type="Gene3D" id="3.40.1020.10">
    <property type="entry name" value="Biosynthetic Threonine Deaminase, Domain 3"/>
    <property type="match status" value="1"/>
</dbReference>
<dbReference type="InterPro" id="IPR011820">
    <property type="entry name" value="IlvA"/>
</dbReference>
<dbReference type="InterPro" id="IPR050147">
    <property type="entry name" value="Ser/Thr_Dehydratase"/>
</dbReference>
<dbReference type="InterPro" id="IPR000634">
    <property type="entry name" value="Ser/Thr_deHydtase_PyrdxlP-BS"/>
</dbReference>
<dbReference type="InterPro" id="IPR001721">
    <property type="entry name" value="TD_ACT-like"/>
</dbReference>
<dbReference type="InterPro" id="IPR038110">
    <property type="entry name" value="TD_ACT-like_sf"/>
</dbReference>
<dbReference type="InterPro" id="IPR001926">
    <property type="entry name" value="TrpB-like_PALP"/>
</dbReference>
<dbReference type="InterPro" id="IPR036052">
    <property type="entry name" value="TrpB-like_PALP_sf"/>
</dbReference>
<dbReference type="NCBIfam" id="NF006390">
    <property type="entry name" value="PRK08639.1"/>
    <property type="match status" value="1"/>
</dbReference>
<dbReference type="NCBIfam" id="TIGR02079">
    <property type="entry name" value="THD1"/>
    <property type="match status" value="1"/>
</dbReference>
<dbReference type="PANTHER" id="PTHR48078:SF11">
    <property type="entry name" value="THREONINE DEHYDRATASE, MITOCHONDRIAL"/>
    <property type="match status" value="1"/>
</dbReference>
<dbReference type="PANTHER" id="PTHR48078">
    <property type="entry name" value="THREONINE DEHYDRATASE, MITOCHONDRIAL-RELATED"/>
    <property type="match status" value="1"/>
</dbReference>
<dbReference type="Pfam" id="PF00291">
    <property type="entry name" value="PALP"/>
    <property type="match status" value="1"/>
</dbReference>
<dbReference type="Pfam" id="PF00585">
    <property type="entry name" value="Thr_dehydrat_C"/>
    <property type="match status" value="1"/>
</dbReference>
<dbReference type="SUPFAM" id="SSF53686">
    <property type="entry name" value="Tryptophan synthase beta subunit-like PLP-dependent enzymes"/>
    <property type="match status" value="1"/>
</dbReference>
<dbReference type="PROSITE" id="PS51672">
    <property type="entry name" value="ACT_LIKE"/>
    <property type="match status" value="1"/>
</dbReference>
<dbReference type="PROSITE" id="PS00165">
    <property type="entry name" value="DEHYDRATASE_SER_THR"/>
    <property type="match status" value="1"/>
</dbReference>
<proteinExistence type="evidence at protein level"/>
<reference key="1">
    <citation type="journal article" date="1998" name="Nature">
        <title>Deciphering the biology of Mycobacterium tuberculosis from the complete genome sequence.</title>
        <authorList>
            <person name="Cole S.T."/>
            <person name="Brosch R."/>
            <person name="Parkhill J."/>
            <person name="Garnier T."/>
            <person name="Churcher C.M."/>
            <person name="Harris D.E."/>
            <person name="Gordon S.V."/>
            <person name="Eiglmeier K."/>
            <person name="Gas S."/>
            <person name="Barry C.E. III"/>
            <person name="Tekaia F."/>
            <person name="Badcock K."/>
            <person name="Basham D."/>
            <person name="Brown D."/>
            <person name="Chillingworth T."/>
            <person name="Connor R."/>
            <person name="Davies R.M."/>
            <person name="Devlin K."/>
            <person name="Feltwell T."/>
            <person name="Gentles S."/>
            <person name="Hamlin N."/>
            <person name="Holroyd S."/>
            <person name="Hornsby T."/>
            <person name="Jagels K."/>
            <person name="Krogh A."/>
            <person name="McLean J."/>
            <person name="Moule S."/>
            <person name="Murphy L.D."/>
            <person name="Oliver S."/>
            <person name="Osborne J."/>
            <person name="Quail M.A."/>
            <person name="Rajandream M.A."/>
            <person name="Rogers J."/>
            <person name="Rutter S."/>
            <person name="Seeger K."/>
            <person name="Skelton S."/>
            <person name="Squares S."/>
            <person name="Squares R."/>
            <person name="Sulston J.E."/>
            <person name="Taylor K."/>
            <person name="Whitehead S."/>
            <person name="Barrell B.G."/>
        </authorList>
    </citation>
    <scope>NUCLEOTIDE SEQUENCE [LARGE SCALE GENOMIC DNA]</scope>
    <source>
        <strain>ATCC 25618 / H37Rv</strain>
    </source>
</reference>
<reference key="2">
    <citation type="journal article" date="2011" name="Mol. Cell. Proteomics">
        <title>Proteogenomic analysis of Mycobacterium tuberculosis by high resolution mass spectrometry.</title>
        <authorList>
            <person name="Kelkar D.S."/>
            <person name="Kumar D."/>
            <person name="Kumar P."/>
            <person name="Balakrishnan L."/>
            <person name="Muthusamy B."/>
            <person name="Yadav A.K."/>
            <person name="Shrivastava P."/>
            <person name="Marimuthu A."/>
            <person name="Anand S."/>
            <person name="Sundaram H."/>
            <person name="Kingsbury R."/>
            <person name="Harsha H.C."/>
            <person name="Nair B."/>
            <person name="Prasad T.S."/>
            <person name="Chauhan D.S."/>
            <person name="Katoch K."/>
            <person name="Katoch V.M."/>
            <person name="Kumar P."/>
            <person name="Chaerkady R."/>
            <person name="Ramachandran S."/>
            <person name="Dash D."/>
            <person name="Pandey A."/>
        </authorList>
    </citation>
    <scope>ACETYLATION [LARGE SCALE ANALYSIS] AT SER-2</scope>
    <scope>CLEAVAGE OF INITIATOR METHIONINE [LARGE SCALE ANALYSIS]</scope>
    <scope>IDENTIFICATION BY MASS SPECTROMETRY [LARGE SCALE ANALYSIS]</scope>
    <source>
        <strain>ATCC 25618 / H37Rv</strain>
    </source>
</reference>
<organism>
    <name type="scientific">Mycobacterium tuberculosis (strain ATCC 25618 / H37Rv)</name>
    <dbReference type="NCBI Taxonomy" id="83332"/>
    <lineage>
        <taxon>Bacteria</taxon>
        <taxon>Bacillati</taxon>
        <taxon>Actinomycetota</taxon>
        <taxon>Actinomycetes</taxon>
        <taxon>Mycobacteriales</taxon>
        <taxon>Mycobacteriaceae</taxon>
        <taxon>Mycobacterium</taxon>
        <taxon>Mycobacterium tuberculosis complex</taxon>
    </lineage>
</organism>
<keyword id="KW-0007">Acetylation</keyword>
<keyword id="KW-0028">Amino-acid biosynthesis</keyword>
<keyword id="KW-0100">Branched-chain amino acid biosynthesis</keyword>
<keyword id="KW-0412">Isoleucine biosynthesis</keyword>
<keyword id="KW-0456">Lyase</keyword>
<keyword id="KW-0663">Pyridoxal phosphate</keyword>
<keyword id="KW-1185">Reference proteome</keyword>
<comment type="function">
    <text evidence="1">Catalyzes the anaerobic formation of alpha-ketobutyrate and ammonia from threonine in a two-step reaction. The first step involved a dehydration of threonine and a production of enamine intermediates (aminocrotonate), which tautomerizes to its imine form (iminobutyrate). Both intermediates are unstable and short-lived. The second step is the nonenzymatic hydrolysis of the enamine/imine intermediates to form 2-ketobutyrate and free ammonia. In the low water environment of the cell, the second step is accelerated by RidA (By similarity).</text>
</comment>
<comment type="catalytic activity">
    <reaction>
        <text>L-threonine = 2-oxobutanoate + NH4(+)</text>
        <dbReference type="Rhea" id="RHEA:22108"/>
        <dbReference type="ChEBI" id="CHEBI:16763"/>
        <dbReference type="ChEBI" id="CHEBI:28938"/>
        <dbReference type="ChEBI" id="CHEBI:57926"/>
        <dbReference type="EC" id="4.3.1.19"/>
    </reaction>
</comment>
<comment type="cofactor">
    <cofactor evidence="1">
        <name>pyridoxal 5'-phosphate</name>
        <dbReference type="ChEBI" id="CHEBI:597326"/>
    </cofactor>
</comment>
<comment type="pathway">
    <text>Amino-acid biosynthesis; L-isoleucine biosynthesis; 2-oxobutanoate from L-threonine: step 1/1.</text>
</comment>
<comment type="subunit">
    <text evidence="1">Homotetramer.</text>
</comment>
<comment type="similarity">
    <text evidence="3">Belongs to the serine/threonine dehydratase family.</text>
</comment>
<name>ILVA_MYCTU</name>
<protein>
    <recommendedName>
        <fullName>L-threonine dehydratase biosynthetic IlvA</fullName>
        <ecNumber>4.3.1.19</ecNumber>
    </recommendedName>
    <alternativeName>
        <fullName>Threonine deaminase</fullName>
    </alternativeName>
</protein>
<evidence type="ECO:0000250" key="1"/>
<evidence type="ECO:0000255" key="2">
    <source>
        <dbReference type="PROSITE-ProRule" id="PRU01008"/>
    </source>
</evidence>
<evidence type="ECO:0000305" key="3"/>
<evidence type="ECO:0007744" key="4">
    <source>
    </source>
</evidence>
<accession>P9WG95</accession>
<accession>L0T9Z2</accession>
<accession>P66897</accession>
<accession>Q10766</accession>
<sequence length="429" mass="45041">MSAELSQSPSSSPLFSLSGADIDRAAKRIAPVVTPTPLQPSDRLSAITGATVYLKREDLQTVRSYKLRGAYNLLVQLSDEELAAGVVCSSAGNHAQGFAYACRCLGVHGRVYVPAKTPKQKRDRIRYHGGEFIDLIVGGSTYDLAAAAALEDVERTGATLVPPFDDLRTIAGQGTIAVEVLGQLEDEPDLVVVPVGGGGCIAGITTYLAERTTNTAVLGVEPAGAAAMMAALAAGEPVTLDHVDQFVDGAAVNRAGTLTYAALAAAGDMVSLTTVDEGAVCTAMLDLYQNEGIIAEPAGALSVAGLLEADIEPGSTVVCLISGGNNDVSRYGEVLERSLVHLGLKHYFLVDFPQEPGALRRFLDDVLGPNDDITLFEYVKRNNRETGEALVGIELGSAADLDGLLARMRATDIHVEALEPGSPAYRYLL</sequence>
<gene>
    <name type="primary">ilvA</name>
    <name type="ordered locus">Rv1559</name>
    <name type="ORF">MTCY48.06c</name>
</gene>
<feature type="initiator methionine" description="Removed" evidence="4">
    <location>
        <position position="1"/>
    </location>
</feature>
<feature type="chain" id="PRO_0000185577" description="L-threonine dehydratase biosynthetic IlvA">
    <location>
        <begin position="2"/>
        <end position="429"/>
    </location>
</feature>
<feature type="domain" description="ACT-like" evidence="2">
    <location>
        <begin position="346"/>
        <end position="420"/>
    </location>
</feature>
<feature type="binding site" evidence="1">
    <location>
        <position position="93"/>
    </location>
    <ligand>
        <name>pyridoxal 5'-phosphate</name>
        <dbReference type="ChEBI" id="CHEBI:597326"/>
    </ligand>
</feature>
<feature type="binding site" evidence="1">
    <location>
        <begin position="196"/>
        <end position="200"/>
    </location>
    <ligand>
        <name>pyridoxal 5'-phosphate</name>
        <dbReference type="ChEBI" id="CHEBI:597326"/>
    </ligand>
</feature>
<feature type="binding site" evidence="1">
    <location>
        <position position="322"/>
    </location>
    <ligand>
        <name>pyridoxal 5'-phosphate</name>
        <dbReference type="ChEBI" id="CHEBI:597326"/>
    </ligand>
</feature>
<feature type="modified residue" description="N-acetylserine" evidence="4">
    <location>
        <position position="2"/>
    </location>
</feature>
<feature type="modified residue" description="N6-(pyridoxal phosphate)lysine" evidence="1">
    <location>
        <position position="66"/>
    </location>
</feature>